<comment type="function">
    <text evidence="1">ATPase subunit of a proteasome-like degradation complex; this subunit has chaperone activity. The binding of ATP and its subsequent hydrolysis by HslU are essential for unfolding of protein substrates subsequently hydrolyzed by HslV. HslU recognizes the N-terminal part of its protein substrates and unfolds these before they are guided to HslV for hydrolysis.</text>
</comment>
<comment type="subunit">
    <text evidence="1">A double ring-shaped homohexamer of HslV is capped on each side by a ring-shaped HslU homohexamer. The assembly of the HslU/HslV complex is dependent on binding of ATP.</text>
</comment>
<comment type="subcellular location">
    <subcellularLocation>
        <location evidence="1">Cytoplasm</location>
    </subcellularLocation>
</comment>
<comment type="similarity">
    <text evidence="1">Belongs to the ClpX chaperone family. HslU subfamily.</text>
</comment>
<feature type="chain" id="PRO_1000125440" description="ATP-dependent protease ATPase subunit HslU">
    <location>
        <begin position="1"/>
        <end position="440"/>
    </location>
</feature>
<feature type="binding site" evidence="1">
    <location>
        <position position="17"/>
    </location>
    <ligand>
        <name>ATP</name>
        <dbReference type="ChEBI" id="CHEBI:30616"/>
    </ligand>
</feature>
<feature type="binding site" evidence="1">
    <location>
        <begin position="59"/>
        <end position="64"/>
    </location>
    <ligand>
        <name>ATP</name>
        <dbReference type="ChEBI" id="CHEBI:30616"/>
    </ligand>
</feature>
<feature type="binding site" evidence="1">
    <location>
        <position position="253"/>
    </location>
    <ligand>
        <name>ATP</name>
        <dbReference type="ChEBI" id="CHEBI:30616"/>
    </ligand>
</feature>
<feature type="binding site" evidence="1">
    <location>
        <position position="318"/>
    </location>
    <ligand>
        <name>ATP</name>
        <dbReference type="ChEBI" id="CHEBI:30616"/>
    </ligand>
</feature>
<feature type="binding site" evidence="1">
    <location>
        <position position="390"/>
    </location>
    <ligand>
        <name>ATP</name>
        <dbReference type="ChEBI" id="CHEBI:30616"/>
    </ligand>
</feature>
<dbReference type="EMBL" id="CP001321">
    <property type="protein sequence ID" value="ACL32842.1"/>
    <property type="molecule type" value="Genomic_DNA"/>
</dbReference>
<dbReference type="RefSeq" id="WP_005713806.1">
    <property type="nucleotide sequence ID" value="NC_011852.1"/>
</dbReference>
<dbReference type="SMR" id="B8F690"/>
<dbReference type="STRING" id="557723.HAPS_1249"/>
<dbReference type="KEGG" id="hap:HAPS_1249"/>
<dbReference type="HOGENOM" id="CLU_033123_0_0_6"/>
<dbReference type="Proteomes" id="UP000006743">
    <property type="component" value="Chromosome"/>
</dbReference>
<dbReference type="GO" id="GO:0009376">
    <property type="term" value="C:HslUV protease complex"/>
    <property type="evidence" value="ECO:0007669"/>
    <property type="project" value="UniProtKB-UniRule"/>
</dbReference>
<dbReference type="GO" id="GO:0005524">
    <property type="term" value="F:ATP binding"/>
    <property type="evidence" value="ECO:0007669"/>
    <property type="project" value="UniProtKB-UniRule"/>
</dbReference>
<dbReference type="GO" id="GO:0016887">
    <property type="term" value="F:ATP hydrolysis activity"/>
    <property type="evidence" value="ECO:0007669"/>
    <property type="project" value="InterPro"/>
</dbReference>
<dbReference type="GO" id="GO:0008233">
    <property type="term" value="F:peptidase activity"/>
    <property type="evidence" value="ECO:0007669"/>
    <property type="project" value="InterPro"/>
</dbReference>
<dbReference type="GO" id="GO:0036402">
    <property type="term" value="F:proteasome-activating activity"/>
    <property type="evidence" value="ECO:0007669"/>
    <property type="project" value="UniProtKB-UniRule"/>
</dbReference>
<dbReference type="GO" id="GO:0043335">
    <property type="term" value="P:protein unfolding"/>
    <property type="evidence" value="ECO:0007669"/>
    <property type="project" value="UniProtKB-UniRule"/>
</dbReference>
<dbReference type="GO" id="GO:0051603">
    <property type="term" value="P:proteolysis involved in protein catabolic process"/>
    <property type="evidence" value="ECO:0007669"/>
    <property type="project" value="TreeGrafter"/>
</dbReference>
<dbReference type="CDD" id="cd19498">
    <property type="entry name" value="RecA-like_HslU"/>
    <property type="match status" value="1"/>
</dbReference>
<dbReference type="FunFam" id="1.10.8.10:FF:000028">
    <property type="entry name" value="ATP-dependent protease ATPase subunit HslU"/>
    <property type="match status" value="2"/>
</dbReference>
<dbReference type="FunFam" id="1.10.8.60:FF:000027">
    <property type="entry name" value="ATP-dependent protease ATPase subunit HslU"/>
    <property type="match status" value="1"/>
</dbReference>
<dbReference type="FunFam" id="3.40.50.300:FF:000213">
    <property type="entry name" value="ATP-dependent protease ATPase subunit HslU"/>
    <property type="match status" value="1"/>
</dbReference>
<dbReference type="FunFam" id="3.40.50.300:FF:000220">
    <property type="entry name" value="ATP-dependent protease ATPase subunit HslU"/>
    <property type="match status" value="1"/>
</dbReference>
<dbReference type="Gene3D" id="1.10.8.60">
    <property type="match status" value="1"/>
</dbReference>
<dbReference type="Gene3D" id="1.10.8.10">
    <property type="entry name" value="DNA helicase RuvA subunit, C-terminal domain"/>
    <property type="match status" value="1"/>
</dbReference>
<dbReference type="Gene3D" id="3.40.50.300">
    <property type="entry name" value="P-loop containing nucleotide triphosphate hydrolases"/>
    <property type="match status" value="2"/>
</dbReference>
<dbReference type="HAMAP" id="MF_00249">
    <property type="entry name" value="HslU"/>
    <property type="match status" value="1"/>
</dbReference>
<dbReference type="InterPro" id="IPR003593">
    <property type="entry name" value="AAA+_ATPase"/>
</dbReference>
<dbReference type="InterPro" id="IPR050052">
    <property type="entry name" value="ATP-dep_Clp_protease_ClpX"/>
</dbReference>
<dbReference type="InterPro" id="IPR003959">
    <property type="entry name" value="ATPase_AAA_core"/>
</dbReference>
<dbReference type="InterPro" id="IPR019489">
    <property type="entry name" value="Clp_ATPase_C"/>
</dbReference>
<dbReference type="InterPro" id="IPR004491">
    <property type="entry name" value="HslU"/>
</dbReference>
<dbReference type="InterPro" id="IPR027417">
    <property type="entry name" value="P-loop_NTPase"/>
</dbReference>
<dbReference type="NCBIfam" id="TIGR00390">
    <property type="entry name" value="hslU"/>
    <property type="match status" value="1"/>
</dbReference>
<dbReference type="NCBIfam" id="NF003544">
    <property type="entry name" value="PRK05201.1"/>
    <property type="match status" value="1"/>
</dbReference>
<dbReference type="PANTHER" id="PTHR48102">
    <property type="entry name" value="ATP-DEPENDENT CLP PROTEASE ATP-BINDING SUBUNIT CLPX-LIKE, MITOCHONDRIAL-RELATED"/>
    <property type="match status" value="1"/>
</dbReference>
<dbReference type="PANTHER" id="PTHR48102:SF3">
    <property type="entry name" value="ATP-DEPENDENT PROTEASE ATPASE SUBUNIT HSLU"/>
    <property type="match status" value="1"/>
</dbReference>
<dbReference type="Pfam" id="PF00004">
    <property type="entry name" value="AAA"/>
    <property type="match status" value="1"/>
</dbReference>
<dbReference type="Pfam" id="PF07724">
    <property type="entry name" value="AAA_2"/>
    <property type="match status" value="1"/>
</dbReference>
<dbReference type="SMART" id="SM00382">
    <property type="entry name" value="AAA"/>
    <property type="match status" value="1"/>
</dbReference>
<dbReference type="SMART" id="SM01086">
    <property type="entry name" value="ClpB_D2-small"/>
    <property type="match status" value="1"/>
</dbReference>
<dbReference type="SUPFAM" id="SSF52540">
    <property type="entry name" value="P-loop containing nucleoside triphosphate hydrolases"/>
    <property type="match status" value="1"/>
</dbReference>
<accession>B8F690</accession>
<gene>
    <name evidence="1" type="primary">hslU</name>
    <name type="ordered locus">HAPS_1249</name>
</gene>
<proteinExistence type="inferred from homology"/>
<sequence>MSMTPREIVSELDAHIIGQNEAKRAVAIALRNRWRRMQLPEELRQEVTPKNILMIGPTGVGKTEIARRLAKLADAPFIKVEATKFTEVGYVGKEVDSIIRDLANVSMKLVRQQAVEKNRMRAQDAAEDRILDVLLPPAKDQWGNVQESDNTSTRQIFRKKLREGQLDDKEIEIDVAAQVSVEIMTPPGMEEMTSQLQSLFEGMSPNKTKKRKMKIKDALKVMVDEEAAKLVNPEELKQQAIEAVEQHGIVFIDEIDKICKKGEHSGGDVSREGVQRDLLPIIEGSTVNTKHGMVKTDHILFICSGAFQVARPSDLLPELQGRLPIRVELKSLNKEDFERILTEPNASLTLQYRELMKTEGVDIEFTKDGISRIAESAFRVNEKTENIGARRLHTVLERLMDSISFDASERSGEKIVIDEKYVSDALNDVVENEDLSRFIL</sequence>
<reference key="1">
    <citation type="journal article" date="2009" name="J. Bacteriol.">
        <title>Complete genome sequence of Haemophilus parasuis SH0165.</title>
        <authorList>
            <person name="Yue M."/>
            <person name="Yang F."/>
            <person name="Yang J."/>
            <person name="Bei W."/>
            <person name="Cai X."/>
            <person name="Chen L."/>
            <person name="Dong J."/>
            <person name="Zhou R."/>
            <person name="Jin M."/>
            <person name="Jin Q."/>
            <person name="Chen H."/>
        </authorList>
    </citation>
    <scope>NUCLEOTIDE SEQUENCE [LARGE SCALE GENOMIC DNA]</scope>
    <source>
        <strain>SH0165</strain>
    </source>
</reference>
<evidence type="ECO:0000255" key="1">
    <source>
        <dbReference type="HAMAP-Rule" id="MF_00249"/>
    </source>
</evidence>
<name>HSLU_GLAP5</name>
<keyword id="KW-0067">ATP-binding</keyword>
<keyword id="KW-0143">Chaperone</keyword>
<keyword id="KW-0963">Cytoplasm</keyword>
<keyword id="KW-0547">Nucleotide-binding</keyword>
<keyword id="KW-1185">Reference proteome</keyword>
<protein>
    <recommendedName>
        <fullName evidence="1">ATP-dependent protease ATPase subunit HslU</fullName>
    </recommendedName>
    <alternativeName>
        <fullName evidence="1">Unfoldase HslU</fullName>
    </alternativeName>
</protein>
<organism>
    <name type="scientific">Glaesserella parasuis serovar 5 (strain SH0165)</name>
    <name type="common">Haemophilus parasuis</name>
    <dbReference type="NCBI Taxonomy" id="557723"/>
    <lineage>
        <taxon>Bacteria</taxon>
        <taxon>Pseudomonadati</taxon>
        <taxon>Pseudomonadota</taxon>
        <taxon>Gammaproteobacteria</taxon>
        <taxon>Pasteurellales</taxon>
        <taxon>Pasteurellaceae</taxon>
        <taxon>Glaesserella</taxon>
    </lineage>
</organism>